<organism>
    <name type="scientific">Porphyra purpurea</name>
    <name type="common">Red seaweed</name>
    <name type="synonym">Ulva purpurea</name>
    <dbReference type="NCBI Taxonomy" id="2787"/>
    <lineage>
        <taxon>Eukaryota</taxon>
        <taxon>Rhodophyta</taxon>
        <taxon>Bangiophyceae</taxon>
        <taxon>Bangiales</taxon>
        <taxon>Bangiaceae</taxon>
        <taxon>Porphyra</taxon>
    </lineage>
</organism>
<name>RK5_PORPU</name>
<feature type="chain" id="PRO_0000125047" description="Large ribosomal subunit protein uL5c">
    <location>
        <begin position="1"/>
        <end position="181"/>
    </location>
</feature>
<evidence type="ECO:0000250" key="1"/>
<evidence type="ECO:0000305" key="2"/>
<dbReference type="EMBL" id="U38804">
    <property type="protein sequence ID" value="AAC08188.1"/>
    <property type="molecule type" value="Genomic_DNA"/>
</dbReference>
<dbReference type="PIR" id="S73223">
    <property type="entry name" value="S73223"/>
</dbReference>
<dbReference type="RefSeq" id="NP_053912.1">
    <property type="nucleotide sequence ID" value="NC_000925.1"/>
</dbReference>
<dbReference type="SMR" id="P51302"/>
<dbReference type="GeneID" id="809931"/>
<dbReference type="GO" id="GO:0009507">
    <property type="term" value="C:chloroplast"/>
    <property type="evidence" value="ECO:0007669"/>
    <property type="project" value="UniProtKB-SubCell"/>
</dbReference>
<dbReference type="GO" id="GO:1990904">
    <property type="term" value="C:ribonucleoprotein complex"/>
    <property type="evidence" value="ECO:0007669"/>
    <property type="project" value="UniProtKB-KW"/>
</dbReference>
<dbReference type="GO" id="GO:0005840">
    <property type="term" value="C:ribosome"/>
    <property type="evidence" value="ECO:0007669"/>
    <property type="project" value="UniProtKB-KW"/>
</dbReference>
<dbReference type="GO" id="GO:0019843">
    <property type="term" value="F:rRNA binding"/>
    <property type="evidence" value="ECO:0007669"/>
    <property type="project" value="UniProtKB-UniRule"/>
</dbReference>
<dbReference type="GO" id="GO:0003735">
    <property type="term" value="F:structural constituent of ribosome"/>
    <property type="evidence" value="ECO:0007669"/>
    <property type="project" value="InterPro"/>
</dbReference>
<dbReference type="GO" id="GO:0006412">
    <property type="term" value="P:translation"/>
    <property type="evidence" value="ECO:0007669"/>
    <property type="project" value="UniProtKB-UniRule"/>
</dbReference>
<dbReference type="FunFam" id="3.30.1440.10:FF:000001">
    <property type="entry name" value="50S ribosomal protein L5"/>
    <property type="match status" value="1"/>
</dbReference>
<dbReference type="Gene3D" id="3.30.1440.10">
    <property type="match status" value="1"/>
</dbReference>
<dbReference type="HAMAP" id="MF_01333_B">
    <property type="entry name" value="Ribosomal_uL5_B"/>
    <property type="match status" value="1"/>
</dbReference>
<dbReference type="InterPro" id="IPR002132">
    <property type="entry name" value="Ribosomal_uL5"/>
</dbReference>
<dbReference type="InterPro" id="IPR020930">
    <property type="entry name" value="Ribosomal_uL5_bac-type"/>
</dbReference>
<dbReference type="InterPro" id="IPR031309">
    <property type="entry name" value="Ribosomal_uL5_C"/>
</dbReference>
<dbReference type="InterPro" id="IPR020929">
    <property type="entry name" value="Ribosomal_uL5_CS"/>
</dbReference>
<dbReference type="InterPro" id="IPR022803">
    <property type="entry name" value="Ribosomal_uL5_dom_sf"/>
</dbReference>
<dbReference type="InterPro" id="IPR031310">
    <property type="entry name" value="Ribosomal_uL5_N"/>
</dbReference>
<dbReference type="NCBIfam" id="NF000585">
    <property type="entry name" value="PRK00010.1"/>
    <property type="match status" value="1"/>
</dbReference>
<dbReference type="PANTHER" id="PTHR11994">
    <property type="entry name" value="60S RIBOSOMAL PROTEIN L11-RELATED"/>
    <property type="match status" value="1"/>
</dbReference>
<dbReference type="Pfam" id="PF00281">
    <property type="entry name" value="Ribosomal_L5"/>
    <property type="match status" value="1"/>
</dbReference>
<dbReference type="Pfam" id="PF00673">
    <property type="entry name" value="Ribosomal_L5_C"/>
    <property type="match status" value="1"/>
</dbReference>
<dbReference type="PIRSF" id="PIRSF002161">
    <property type="entry name" value="Ribosomal_L5"/>
    <property type="match status" value="1"/>
</dbReference>
<dbReference type="SUPFAM" id="SSF55282">
    <property type="entry name" value="RL5-like"/>
    <property type="match status" value="1"/>
</dbReference>
<dbReference type="PROSITE" id="PS00358">
    <property type="entry name" value="RIBOSOMAL_L5"/>
    <property type="match status" value="1"/>
</dbReference>
<reference key="1">
    <citation type="journal article" date="1995" name="Plant Mol. Biol. Rep.">
        <title>Complete nucleotide sequence of the Porphyra purpurea chloroplast genome.</title>
        <authorList>
            <person name="Reith M.E."/>
            <person name="Munholland J."/>
        </authorList>
    </citation>
    <scope>NUCLEOTIDE SEQUENCE [LARGE SCALE GENOMIC DNA]</scope>
    <source>
        <strain>Avonport</strain>
    </source>
</reference>
<comment type="function">
    <text evidence="1">Binds 5S rRNA, forms part of the central protuberance of the 50S subunit.</text>
</comment>
<comment type="subunit">
    <text evidence="1">Part of the 50S ribosomal subunit; contacts the 5S rRNA.</text>
</comment>
<comment type="subcellular location">
    <subcellularLocation>
        <location>Plastid</location>
        <location>Chloroplast</location>
    </subcellularLocation>
</comment>
<comment type="similarity">
    <text evidence="2">Belongs to the universal ribosomal protein uL5 family.</text>
</comment>
<accession>P51302</accession>
<proteinExistence type="inferred from homology"/>
<gene>
    <name type="primary">rpl5</name>
</gene>
<protein>
    <recommendedName>
        <fullName evidence="2">Large ribosomal subunit protein uL5c</fullName>
    </recommendedName>
    <alternativeName>
        <fullName>50S ribosomal protein L5, chloroplastic</fullName>
    </alternativeName>
</protein>
<sequence>MVIGLKEKYKTTVTQALKEEFQYENIHEVPRFTKITINRGLGEASQNAKALESSIQELTLITGQKPIVTRAKKSIAGFKIREEVPIGIVVHLRKDKMYSFLEKLINLTLPRIRDFRGISPKSFDGKGNYNLGLREQLIFPEIDYDNIDQIRGLDISIVTTAKTDQEGLALLKKLGMPFRES</sequence>
<geneLocation type="chloroplast"/>
<keyword id="KW-0150">Chloroplast</keyword>
<keyword id="KW-0934">Plastid</keyword>
<keyword id="KW-0687">Ribonucleoprotein</keyword>
<keyword id="KW-0689">Ribosomal protein</keyword>
<keyword id="KW-0694">RNA-binding</keyword>
<keyword id="KW-0699">rRNA-binding</keyword>